<accession>Q9S810</accession>
<accession>Q9FXJ0</accession>
<sequence>MGAYRAEDDYDYLFKVVLTGDSGVGKSNLLSRFTRNDFSHDSRATIGVEFATRSIQCDDKIVKAQIWDTAGQERYRAITSAYYRGAVGALLVYDVTRHVTFENVERWLKELRDHTDANIVIMLVGNKADLRHLRAISTEEAKAFAERENTFFMETSALEAVNVDNAFTEVLTQIYRVVSKKALEAGDDPTTALPKGQMINVGGRDDISAVKKPGCCSA</sequence>
<proteinExistence type="evidence at transcript level"/>
<evidence type="ECO:0000250" key="1"/>
<evidence type="ECO:0000305" key="2"/>
<keyword id="KW-1003">Cell membrane</keyword>
<keyword id="KW-0342">GTP-binding</keyword>
<keyword id="KW-0449">Lipoprotein</keyword>
<keyword id="KW-0472">Membrane</keyword>
<keyword id="KW-0547">Nucleotide-binding</keyword>
<keyword id="KW-0636">Prenylation</keyword>
<keyword id="KW-0653">Protein transport</keyword>
<keyword id="KW-1185">Reference proteome</keyword>
<keyword id="KW-0813">Transport</keyword>
<feature type="chain" id="PRO_0000407340" description="Ras-related protein RABA1i">
    <location>
        <begin position="1"/>
        <end position="218"/>
    </location>
</feature>
<feature type="short sequence motif" description="Effector region" evidence="1">
    <location>
        <begin position="42"/>
        <end position="50"/>
    </location>
</feature>
<feature type="binding site" evidence="1">
    <location>
        <begin position="20"/>
        <end position="27"/>
    </location>
    <ligand>
        <name>GTP</name>
        <dbReference type="ChEBI" id="CHEBI:37565"/>
    </ligand>
</feature>
<feature type="binding site" evidence="1">
    <location>
        <begin position="68"/>
        <end position="72"/>
    </location>
    <ligand>
        <name>GTP</name>
        <dbReference type="ChEBI" id="CHEBI:37565"/>
    </ligand>
</feature>
<feature type="binding site" evidence="1">
    <location>
        <begin position="126"/>
        <end position="129"/>
    </location>
    <ligand>
        <name>GTP</name>
        <dbReference type="ChEBI" id="CHEBI:37565"/>
    </ligand>
</feature>
<feature type="binding site" evidence="1">
    <location>
        <begin position="156"/>
        <end position="157"/>
    </location>
    <ligand>
        <name>GTP</name>
        <dbReference type="ChEBI" id="CHEBI:37565"/>
    </ligand>
</feature>
<feature type="lipid moiety-binding region" description="S-geranylgeranyl cysteine" evidence="1">
    <location>
        <position position="215"/>
    </location>
</feature>
<feature type="lipid moiety-binding region" description="S-geranylgeranyl cysteine" evidence="1">
    <location>
        <position position="216"/>
    </location>
</feature>
<name>RAA1I_ARATH</name>
<gene>
    <name type="primary">RABA1I</name>
    <name type="ordered locus">At1g28550</name>
    <name type="ORF">F1K23.21</name>
    <name type="ORF">F3M18.2</name>
</gene>
<dbReference type="EMBL" id="AC007508">
    <property type="protein sequence ID" value="AAF24551.2"/>
    <property type="status" value="ALT_SEQ"/>
    <property type="molecule type" value="Genomic_DNA"/>
</dbReference>
<dbReference type="EMBL" id="AC010155">
    <property type="protein sequence ID" value="AAF16749.1"/>
    <property type="molecule type" value="Genomic_DNA"/>
</dbReference>
<dbReference type="EMBL" id="CP002684">
    <property type="protein sequence ID" value="AEE30991.1"/>
    <property type="molecule type" value="Genomic_DNA"/>
</dbReference>
<dbReference type="EMBL" id="DQ056467">
    <property type="protein sequence ID" value="AAY78624.1"/>
    <property type="molecule type" value="mRNA"/>
</dbReference>
<dbReference type="RefSeq" id="NP_174177.1">
    <property type="nucleotide sequence ID" value="NM_102623.2"/>
</dbReference>
<dbReference type="SMR" id="Q9S810"/>
<dbReference type="FunCoup" id="Q9S810">
    <property type="interactions" value="2823"/>
</dbReference>
<dbReference type="STRING" id="3702.Q9S810"/>
<dbReference type="PaxDb" id="3702-AT1G28550.1"/>
<dbReference type="ProteomicsDB" id="236483"/>
<dbReference type="EnsemblPlants" id="AT1G28550.1">
    <property type="protein sequence ID" value="AT1G28550.1"/>
    <property type="gene ID" value="AT1G28550"/>
</dbReference>
<dbReference type="GeneID" id="839755"/>
<dbReference type="Gramene" id="AT1G28550.1">
    <property type="protein sequence ID" value="AT1G28550.1"/>
    <property type="gene ID" value="AT1G28550"/>
</dbReference>
<dbReference type="KEGG" id="ath:AT1G28550"/>
<dbReference type="Araport" id="AT1G28550"/>
<dbReference type="TAIR" id="AT1G28550">
    <property type="gene designation" value="RABA1I"/>
</dbReference>
<dbReference type="eggNOG" id="KOG0087">
    <property type="taxonomic scope" value="Eukaryota"/>
</dbReference>
<dbReference type="HOGENOM" id="CLU_041217_23_0_1"/>
<dbReference type="InParanoid" id="Q9S810"/>
<dbReference type="OMA" id="HIIFMET"/>
<dbReference type="PhylomeDB" id="Q9S810"/>
<dbReference type="PRO" id="PR:Q9S810"/>
<dbReference type="Proteomes" id="UP000006548">
    <property type="component" value="Chromosome 1"/>
</dbReference>
<dbReference type="ExpressionAtlas" id="Q9S810">
    <property type="expression patterns" value="baseline and differential"/>
</dbReference>
<dbReference type="GO" id="GO:0005886">
    <property type="term" value="C:plasma membrane"/>
    <property type="evidence" value="ECO:0007005"/>
    <property type="project" value="TAIR"/>
</dbReference>
<dbReference type="GO" id="GO:0005525">
    <property type="term" value="F:GTP binding"/>
    <property type="evidence" value="ECO:0007669"/>
    <property type="project" value="UniProtKB-KW"/>
</dbReference>
<dbReference type="GO" id="GO:0003924">
    <property type="term" value="F:GTPase activity"/>
    <property type="evidence" value="ECO:0007669"/>
    <property type="project" value="InterPro"/>
</dbReference>
<dbReference type="GO" id="GO:0042546">
    <property type="term" value="P:cell wall biogenesis"/>
    <property type="evidence" value="ECO:0000315"/>
    <property type="project" value="TAIR"/>
</dbReference>
<dbReference type="GO" id="GO:0015031">
    <property type="term" value="P:protein transport"/>
    <property type="evidence" value="ECO:0007669"/>
    <property type="project" value="UniProtKB-KW"/>
</dbReference>
<dbReference type="CDD" id="cd01868">
    <property type="entry name" value="Rab11_like"/>
    <property type="match status" value="1"/>
</dbReference>
<dbReference type="FunFam" id="3.40.50.300:FF:000067">
    <property type="entry name" value="ras-related protein RABA1f"/>
    <property type="match status" value="1"/>
</dbReference>
<dbReference type="Gene3D" id="3.40.50.300">
    <property type="entry name" value="P-loop containing nucleotide triphosphate hydrolases"/>
    <property type="match status" value="1"/>
</dbReference>
<dbReference type="InterPro" id="IPR027417">
    <property type="entry name" value="P-loop_NTPase"/>
</dbReference>
<dbReference type="InterPro" id="IPR050209">
    <property type="entry name" value="Rab_GTPases_membrane_traffic"/>
</dbReference>
<dbReference type="InterPro" id="IPR005225">
    <property type="entry name" value="Small_GTP-bd"/>
</dbReference>
<dbReference type="InterPro" id="IPR001806">
    <property type="entry name" value="Small_GTPase"/>
</dbReference>
<dbReference type="NCBIfam" id="TIGR00231">
    <property type="entry name" value="small_GTP"/>
    <property type="match status" value="1"/>
</dbReference>
<dbReference type="PANTHER" id="PTHR47979">
    <property type="entry name" value="DRAB11-RELATED"/>
    <property type="match status" value="1"/>
</dbReference>
<dbReference type="Pfam" id="PF00071">
    <property type="entry name" value="Ras"/>
    <property type="match status" value="1"/>
</dbReference>
<dbReference type="PRINTS" id="PR00449">
    <property type="entry name" value="RASTRNSFRMNG"/>
</dbReference>
<dbReference type="SMART" id="SM00175">
    <property type="entry name" value="RAB"/>
    <property type="match status" value="1"/>
</dbReference>
<dbReference type="SMART" id="SM00176">
    <property type="entry name" value="RAN"/>
    <property type="match status" value="1"/>
</dbReference>
<dbReference type="SMART" id="SM00173">
    <property type="entry name" value="RAS"/>
    <property type="match status" value="1"/>
</dbReference>
<dbReference type="SMART" id="SM00174">
    <property type="entry name" value="RHO"/>
    <property type="match status" value="1"/>
</dbReference>
<dbReference type="SUPFAM" id="SSF52540">
    <property type="entry name" value="P-loop containing nucleoside triphosphate hydrolases"/>
    <property type="match status" value="1"/>
</dbReference>
<dbReference type="PROSITE" id="PS51419">
    <property type="entry name" value="RAB"/>
    <property type="match status" value="1"/>
</dbReference>
<comment type="function">
    <text evidence="1">Intracellular vesicle trafficking and protein transport.</text>
</comment>
<comment type="subcellular location">
    <subcellularLocation>
        <location evidence="2">Cell membrane</location>
        <topology evidence="2">Lipid-anchor</topology>
        <orientation evidence="2">Cytoplasmic side</orientation>
    </subcellularLocation>
</comment>
<comment type="similarity">
    <text evidence="2">Belongs to the small GTPase superfamily. Rab family.</text>
</comment>
<comment type="sequence caution" evidence="2">
    <conflict type="erroneous gene model prediction">
        <sequence resource="EMBL-CDS" id="AAF24551"/>
    </conflict>
</comment>
<reference key="1">
    <citation type="journal article" date="2000" name="Nature">
        <title>Sequence and analysis of chromosome 1 of the plant Arabidopsis thaliana.</title>
        <authorList>
            <person name="Theologis A."/>
            <person name="Ecker J.R."/>
            <person name="Palm C.J."/>
            <person name="Federspiel N.A."/>
            <person name="Kaul S."/>
            <person name="White O."/>
            <person name="Alonso J."/>
            <person name="Altafi H."/>
            <person name="Araujo R."/>
            <person name="Bowman C.L."/>
            <person name="Brooks S.Y."/>
            <person name="Buehler E."/>
            <person name="Chan A."/>
            <person name="Chao Q."/>
            <person name="Chen H."/>
            <person name="Cheuk R.F."/>
            <person name="Chin C.W."/>
            <person name="Chung M.K."/>
            <person name="Conn L."/>
            <person name="Conway A.B."/>
            <person name="Conway A.R."/>
            <person name="Creasy T.H."/>
            <person name="Dewar K."/>
            <person name="Dunn P."/>
            <person name="Etgu P."/>
            <person name="Feldblyum T.V."/>
            <person name="Feng J.-D."/>
            <person name="Fong B."/>
            <person name="Fujii C.Y."/>
            <person name="Gill J.E."/>
            <person name="Goldsmith A.D."/>
            <person name="Haas B."/>
            <person name="Hansen N.F."/>
            <person name="Hughes B."/>
            <person name="Huizar L."/>
            <person name="Hunter J.L."/>
            <person name="Jenkins J."/>
            <person name="Johnson-Hopson C."/>
            <person name="Khan S."/>
            <person name="Khaykin E."/>
            <person name="Kim C.J."/>
            <person name="Koo H.L."/>
            <person name="Kremenetskaia I."/>
            <person name="Kurtz D.B."/>
            <person name="Kwan A."/>
            <person name="Lam B."/>
            <person name="Langin-Hooper S."/>
            <person name="Lee A."/>
            <person name="Lee J.M."/>
            <person name="Lenz C.A."/>
            <person name="Li J.H."/>
            <person name="Li Y.-P."/>
            <person name="Lin X."/>
            <person name="Liu S.X."/>
            <person name="Liu Z.A."/>
            <person name="Luros J.S."/>
            <person name="Maiti R."/>
            <person name="Marziali A."/>
            <person name="Militscher J."/>
            <person name="Miranda M."/>
            <person name="Nguyen M."/>
            <person name="Nierman W.C."/>
            <person name="Osborne B.I."/>
            <person name="Pai G."/>
            <person name="Peterson J."/>
            <person name="Pham P.K."/>
            <person name="Rizzo M."/>
            <person name="Rooney T."/>
            <person name="Rowley D."/>
            <person name="Sakano H."/>
            <person name="Salzberg S.L."/>
            <person name="Schwartz J.R."/>
            <person name="Shinn P."/>
            <person name="Southwick A.M."/>
            <person name="Sun H."/>
            <person name="Tallon L.J."/>
            <person name="Tambunga G."/>
            <person name="Toriumi M.J."/>
            <person name="Town C.D."/>
            <person name="Utterback T."/>
            <person name="Van Aken S."/>
            <person name="Vaysberg M."/>
            <person name="Vysotskaia V.S."/>
            <person name="Walker M."/>
            <person name="Wu D."/>
            <person name="Yu G."/>
            <person name="Fraser C.M."/>
            <person name="Venter J.C."/>
            <person name="Davis R.W."/>
        </authorList>
    </citation>
    <scope>NUCLEOTIDE SEQUENCE [LARGE SCALE GENOMIC DNA]</scope>
    <source>
        <strain>cv. Columbia</strain>
    </source>
</reference>
<reference key="2">
    <citation type="journal article" date="2017" name="Plant J.">
        <title>Araport11: a complete reannotation of the Arabidopsis thaliana reference genome.</title>
        <authorList>
            <person name="Cheng C.Y."/>
            <person name="Krishnakumar V."/>
            <person name="Chan A.P."/>
            <person name="Thibaud-Nissen F."/>
            <person name="Schobel S."/>
            <person name="Town C.D."/>
        </authorList>
    </citation>
    <scope>GENOME REANNOTATION</scope>
    <source>
        <strain>cv. Columbia</strain>
    </source>
</reference>
<reference key="3">
    <citation type="submission" date="2005-05" db="EMBL/GenBank/DDBJ databases">
        <authorList>
            <person name="Underwood B.A."/>
            <person name="Xiao Y.-L."/>
            <person name="Moskal W.A. Jr."/>
            <person name="Monaghan E.L."/>
            <person name="Wang W."/>
            <person name="Redman J.C."/>
            <person name="Wu H.C."/>
            <person name="Utterback T."/>
            <person name="Town C.D."/>
        </authorList>
    </citation>
    <scope>NUCLEOTIDE SEQUENCE [LARGE SCALE MRNA]</scope>
    <source>
        <strain>cv. Columbia</strain>
    </source>
</reference>
<reference key="4">
    <citation type="journal article" date="2003" name="Plant Physiol.">
        <title>Analysis of the small GTPase gene superfamily of Arabidopsis.</title>
        <authorList>
            <person name="Vernoud V."/>
            <person name="Horton A.C."/>
            <person name="Yang Z."/>
            <person name="Nielsen E."/>
        </authorList>
    </citation>
    <scope>GENE FAMILY</scope>
    <scope>NOMENCLATURE</scope>
</reference>
<organism>
    <name type="scientific">Arabidopsis thaliana</name>
    <name type="common">Mouse-ear cress</name>
    <dbReference type="NCBI Taxonomy" id="3702"/>
    <lineage>
        <taxon>Eukaryota</taxon>
        <taxon>Viridiplantae</taxon>
        <taxon>Streptophyta</taxon>
        <taxon>Embryophyta</taxon>
        <taxon>Tracheophyta</taxon>
        <taxon>Spermatophyta</taxon>
        <taxon>Magnoliopsida</taxon>
        <taxon>eudicotyledons</taxon>
        <taxon>Gunneridae</taxon>
        <taxon>Pentapetalae</taxon>
        <taxon>rosids</taxon>
        <taxon>malvids</taxon>
        <taxon>Brassicales</taxon>
        <taxon>Brassicaceae</taxon>
        <taxon>Camelineae</taxon>
        <taxon>Arabidopsis</taxon>
    </lineage>
</organism>
<protein>
    <recommendedName>
        <fullName>Ras-related protein RABA1i</fullName>
        <shortName>AtRABA1i</shortName>
    </recommendedName>
</protein>